<sequence>MIPDVSQALAWLEKHPQALKGIQRGLERETLRVNADGTLATTGHPEALGSALTHKWITTDFAEALLEFITPVDGDIQHMLTFMRDLHRYTARKLGDERMWPLSMPCYIAEGQDIELAQYGTSNTGRFKTLYREGLKNRYGALMQTISGVHYNFSLPMAFWQAKCGVTEGEAAKEKISAGYFRLIRNYYRFGWVIPYLFGASPAICSSFLQGKPTTLPFEKTDCGMYYLPYATSLRLSDLGYTNKSQSNLGITFNDLHEYVAGLKRAIKTPSEEYARIGVEKDGKRLQINSNVLQIENELYAPIRPKRVTRSGESPSDALLRGGIEYIEVRSLDINPFSPIGVDEQQVRFLDLFMVWCVLADAPEMSSDELLCTRTNWNRVILEGRKPGLTLGIGCETAQFPLPKVGKDLFRDLKRVAQTLDSIHGGEEYQKVCDELVACFDNPELTFSARILRSMIDEGIGGTGKAFGEAYRNLLREEPLEILQEEEFIAERDASVRRQQEIEAADTEPFAAWLAKHA</sequence>
<comment type="catalytic activity">
    <reaction evidence="1">
        <text>L-cysteine + L-glutamate + ATP = gamma-L-glutamyl-L-cysteine + ADP + phosphate + H(+)</text>
        <dbReference type="Rhea" id="RHEA:13285"/>
        <dbReference type="ChEBI" id="CHEBI:15378"/>
        <dbReference type="ChEBI" id="CHEBI:29985"/>
        <dbReference type="ChEBI" id="CHEBI:30616"/>
        <dbReference type="ChEBI" id="CHEBI:35235"/>
        <dbReference type="ChEBI" id="CHEBI:43474"/>
        <dbReference type="ChEBI" id="CHEBI:58173"/>
        <dbReference type="ChEBI" id="CHEBI:456216"/>
        <dbReference type="EC" id="6.3.2.2"/>
    </reaction>
</comment>
<comment type="pathway">
    <text evidence="1">Sulfur metabolism; glutathione biosynthesis; glutathione from L-cysteine and L-glutamate: step 1/2.</text>
</comment>
<comment type="similarity">
    <text evidence="1">Belongs to the glutamate--cysteine ligase type 1 family. Type 1 subfamily.</text>
</comment>
<reference key="1">
    <citation type="journal article" date="2004" name="Nat. Genet.">
        <title>Comparison of genome degradation in Paratyphi A and Typhi, human-restricted serovars of Salmonella enterica that cause typhoid.</title>
        <authorList>
            <person name="McClelland M."/>
            <person name="Sanderson K.E."/>
            <person name="Clifton S.W."/>
            <person name="Latreille P."/>
            <person name="Porwollik S."/>
            <person name="Sabo A."/>
            <person name="Meyer R."/>
            <person name="Bieri T."/>
            <person name="Ozersky P."/>
            <person name="McLellan M."/>
            <person name="Harkins C.R."/>
            <person name="Wang C."/>
            <person name="Nguyen C."/>
            <person name="Berghoff A."/>
            <person name="Elliott G."/>
            <person name="Kohlberg S."/>
            <person name="Strong C."/>
            <person name="Du F."/>
            <person name="Carter J."/>
            <person name="Kremizki C."/>
            <person name="Layman D."/>
            <person name="Leonard S."/>
            <person name="Sun H."/>
            <person name="Fulton L."/>
            <person name="Nash W."/>
            <person name="Miner T."/>
            <person name="Minx P."/>
            <person name="Delehaunty K."/>
            <person name="Fronick C."/>
            <person name="Magrini V."/>
            <person name="Nhan M."/>
            <person name="Warren W."/>
            <person name="Florea L."/>
            <person name="Spieth J."/>
            <person name="Wilson R.K."/>
        </authorList>
    </citation>
    <scope>NUCLEOTIDE SEQUENCE [LARGE SCALE GENOMIC DNA]</scope>
    <source>
        <strain>ATCC 9150 / SARB42</strain>
    </source>
</reference>
<organism>
    <name type="scientific">Salmonella paratyphi A (strain ATCC 9150 / SARB42)</name>
    <dbReference type="NCBI Taxonomy" id="295319"/>
    <lineage>
        <taxon>Bacteria</taxon>
        <taxon>Pseudomonadati</taxon>
        <taxon>Pseudomonadota</taxon>
        <taxon>Gammaproteobacteria</taxon>
        <taxon>Enterobacterales</taxon>
        <taxon>Enterobacteriaceae</taxon>
        <taxon>Salmonella</taxon>
    </lineage>
</organism>
<evidence type="ECO:0000255" key="1">
    <source>
        <dbReference type="HAMAP-Rule" id="MF_00578"/>
    </source>
</evidence>
<accession>Q5PF10</accession>
<gene>
    <name evidence="1" type="primary">gshA</name>
    <name type="ordered locus">SPA2677</name>
</gene>
<dbReference type="EC" id="6.3.2.2" evidence="1"/>
<dbReference type="EMBL" id="CP000026">
    <property type="protein sequence ID" value="AAV78538.1"/>
    <property type="molecule type" value="Genomic_DNA"/>
</dbReference>
<dbReference type="RefSeq" id="WP_000611821.1">
    <property type="nucleotide sequence ID" value="NC_006511.1"/>
</dbReference>
<dbReference type="SMR" id="Q5PF10"/>
<dbReference type="KEGG" id="spt:SPA2677"/>
<dbReference type="HOGENOM" id="CLU_020728_3_0_6"/>
<dbReference type="UniPathway" id="UPA00142">
    <property type="reaction ID" value="UER00209"/>
</dbReference>
<dbReference type="Proteomes" id="UP000008185">
    <property type="component" value="Chromosome"/>
</dbReference>
<dbReference type="GO" id="GO:0005829">
    <property type="term" value="C:cytosol"/>
    <property type="evidence" value="ECO:0007669"/>
    <property type="project" value="TreeGrafter"/>
</dbReference>
<dbReference type="GO" id="GO:0005524">
    <property type="term" value="F:ATP binding"/>
    <property type="evidence" value="ECO:0007669"/>
    <property type="project" value="UniProtKB-KW"/>
</dbReference>
<dbReference type="GO" id="GO:0004357">
    <property type="term" value="F:glutamate-cysteine ligase activity"/>
    <property type="evidence" value="ECO:0007669"/>
    <property type="project" value="UniProtKB-UniRule"/>
</dbReference>
<dbReference type="GO" id="GO:0046872">
    <property type="term" value="F:metal ion binding"/>
    <property type="evidence" value="ECO:0007669"/>
    <property type="project" value="TreeGrafter"/>
</dbReference>
<dbReference type="GO" id="GO:0006750">
    <property type="term" value="P:glutathione biosynthetic process"/>
    <property type="evidence" value="ECO:0007669"/>
    <property type="project" value="UniProtKB-UniRule"/>
</dbReference>
<dbReference type="FunFam" id="3.30.590.20:FF:000001">
    <property type="entry name" value="Glutamate--cysteine ligase"/>
    <property type="match status" value="1"/>
</dbReference>
<dbReference type="Gene3D" id="3.30.590.20">
    <property type="match status" value="1"/>
</dbReference>
<dbReference type="HAMAP" id="MF_00578">
    <property type="entry name" value="Glu_cys_ligase"/>
    <property type="match status" value="1"/>
</dbReference>
<dbReference type="InterPro" id="IPR014746">
    <property type="entry name" value="Gln_synth/guanido_kin_cat_dom"/>
</dbReference>
<dbReference type="InterPro" id="IPR007370">
    <property type="entry name" value="Glu_cys_ligase"/>
</dbReference>
<dbReference type="InterPro" id="IPR006334">
    <property type="entry name" value="Glut_cys_ligase"/>
</dbReference>
<dbReference type="NCBIfam" id="TIGR01434">
    <property type="entry name" value="glu_cys_ligase"/>
    <property type="match status" value="1"/>
</dbReference>
<dbReference type="PANTHER" id="PTHR38761">
    <property type="entry name" value="GLUTAMATE--CYSTEINE LIGASE"/>
    <property type="match status" value="1"/>
</dbReference>
<dbReference type="PANTHER" id="PTHR38761:SF1">
    <property type="entry name" value="GLUTAMATE--CYSTEINE LIGASE"/>
    <property type="match status" value="1"/>
</dbReference>
<dbReference type="Pfam" id="PF04262">
    <property type="entry name" value="Glu_cys_ligase"/>
    <property type="match status" value="1"/>
</dbReference>
<dbReference type="SUPFAM" id="SSF55931">
    <property type="entry name" value="Glutamine synthetase/guanido kinase"/>
    <property type="match status" value="1"/>
</dbReference>
<keyword id="KW-0067">ATP-binding</keyword>
<keyword id="KW-0317">Glutathione biosynthesis</keyword>
<keyword id="KW-0436">Ligase</keyword>
<keyword id="KW-0547">Nucleotide-binding</keyword>
<protein>
    <recommendedName>
        <fullName evidence="1">Glutamate--cysteine ligase</fullName>
        <ecNumber evidence="1">6.3.2.2</ecNumber>
    </recommendedName>
    <alternativeName>
        <fullName evidence="1">Gamma-ECS</fullName>
        <shortName evidence="1">GCS</shortName>
    </alternativeName>
    <alternativeName>
        <fullName evidence="1">Gamma-glutamylcysteine synthetase</fullName>
    </alternativeName>
</protein>
<name>GSH1_SALPA</name>
<feature type="chain" id="PRO_0000192537" description="Glutamate--cysteine ligase">
    <location>
        <begin position="1"/>
        <end position="518"/>
    </location>
</feature>
<proteinExistence type="inferred from homology"/>